<comment type="function">
    <text evidence="1">Functions in both vacuole inheritance and protein targeting from the cytoplasm to vacuole.</text>
</comment>
<comment type="subcellular location">
    <subcellularLocation>
        <location evidence="1">Vacuole membrane</location>
        <topology evidence="1">Lipid-anchor</topology>
    </subcellularLocation>
</comment>
<comment type="similarity">
    <text evidence="3">Belongs to the beta-catenin family.</text>
</comment>
<dbReference type="EMBL" id="AE016818">
    <property type="protein sequence ID" value="AAS52637.1"/>
    <property type="molecule type" value="Genomic_DNA"/>
</dbReference>
<dbReference type="RefSeq" id="NP_984813.1">
    <property type="nucleotide sequence ID" value="NM_210167.1"/>
</dbReference>
<dbReference type="SMR" id="Q757R0"/>
<dbReference type="FunCoup" id="Q757R0">
    <property type="interactions" value="135"/>
</dbReference>
<dbReference type="STRING" id="284811.Q757R0"/>
<dbReference type="EnsemblFungi" id="AAS52637">
    <property type="protein sequence ID" value="AAS52637"/>
    <property type="gene ID" value="AGOS_AEL048W"/>
</dbReference>
<dbReference type="GeneID" id="4621006"/>
<dbReference type="KEGG" id="ago:AGOS_AEL048W"/>
<dbReference type="eggNOG" id="KOG4224">
    <property type="taxonomic scope" value="Eukaryota"/>
</dbReference>
<dbReference type="HOGENOM" id="CLU_021483_0_0_1"/>
<dbReference type="InParanoid" id="Q757R0"/>
<dbReference type="OMA" id="VWDKPDG"/>
<dbReference type="OrthoDB" id="7537227at2759"/>
<dbReference type="Proteomes" id="UP000000591">
    <property type="component" value="Chromosome V"/>
</dbReference>
<dbReference type="GO" id="GO:0000329">
    <property type="term" value="C:fungal-type vacuole membrane"/>
    <property type="evidence" value="ECO:0000318"/>
    <property type="project" value="GO_Central"/>
</dbReference>
<dbReference type="GO" id="GO:0045121">
    <property type="term" value="C:membrane raft"/>
    <property type="evidence" value="ECO:0007669"/>
    <property type="project" value="EnsemblFungi"/>
</dbReference>
<dbReference type="GO" id="GO:0071563">
    <property type="term" value="C:Myo2p-Vac17p-Vac8p transport complex"/>
    <property type="evidence" value="ECO:0007669"/>
    <property type="project" value="EnsemblFungi"/>
</dbReference>
<dbReference type="GO" id="GO:0031965">
    <property type="term" value="C:nuclear membrane"/>
    <property type="evidence" value="ECO:0007669"/>
    <property type="project" value="EnsemblFungi"/>
</dbReference>
<dbReference type="GO" id="GO:0071561">
    <property type="term" value="C:nucleus-vacuole junction"/>
    <property type="evidence" value="ECO:0007669"/>
    <property type="project" value="EnsemblFungi"/>
</dbReference>
<dbReference type="GO" id="GO:0000407">
    <property type="term" value="C:phagophore assembly site"/>
    <property type="evidence" value="ECO:0007669"/>
    <property type="project" value="EnsemblFungi"/>
</dbReference>
<dbReference type="GO" id="GO:0042802">
    <property type="term" value="F:identical protein binding"/>
    <property type="evidence" value="ECO:0007669"/>
    <property type="project" value="EnsemblFungi"/>
</dbReference>
<dbReference type="GO" id="GO:0043495">
    <property type="term" value="F:protein-membrane adaptor activity"/>
    <property type="evidence" value="ECO:0000318"/>
    <property type="project" value="GO_Central"/>
</dbReference>
<dbReference type="GO" id="GO:0000045">
    <property type="term" value="P:autophagosome assembly"/>
    <property type="evidence" value="ECO:0000318"/>
    <property type="project" value="GO_Central"/>
</dbReference>
<dbReference type="GO" id="GO:0071255">
    <property type="term" value="P:Cvt vesicle assembly"/>
    <property type="evidence" value="ECO:0007669"/>
    <property type="project" value="EnsemblFungi"/>
</dbReference>
<dbReference type="GO" id="GO:0051656">
    <property type="term" value="P:establishment of organelle localization"/>
    <property type="evidence" value="ECO:0007669"/>
    <property type="project" value="EnsemblFungi"/>
</dbReference>
<dbReference type="GO" id="GO:0071562">
    <property type="term" value="P:nucleus-vacuole junction assembly"/>
    <property type="evidence" value="ECO:0000318"/>
    <property type="project" value="GO_Central"/>
</dbReference>
<dbReference type="GO" id="GO:0000425">
    <property type="term" value="P:pexophagy"/>
    <property type="evidence" value="ECO:0007669"/>
    <property type="project" value="EnsemblFungi"/>
</dbReference>
<dbReference type="GO" id="GO:0034727">
    <property type="term" value="P:piecemeal microautophagy of the nucleus"/>
    <property type="evidence" value="ECO:0007669"/>
    <property type="project" value="EnsemblFungi"/>
</dbReference>
<dbReference type="GO" id="GO:1903044">
    <property type="term" value="P:protein localization to membrane raft"/>
    <property type="evidence" value="ECO:0007669"/>
    <property type="project" value="EnsemblFungi"/>
</dbReference>
<dbReference type="GO" id="GO:0034497">
    <property type="term" value="P:protein localization to phagophore assembly site"/>
    <property type="evidence" value="ECO:0007669"/>
    <property type="project" value="EnsemblFungi"/>
</dbReference>
<dbReference type="GO" id="GO:0031503">
    <property type="term" value="P:protein-containing complex localization"/>
    <property type="evidence" value="ECO:0007669"/>
    <property type="project" value="EnsemblFungi"/>
</dbReference>
<dbReference type="GO" id="GO:0034517">
    <property type="term" value="P:ribophagy"/>
    <property type="evidence" value="ECO:0007669"/>
    <property type="project" value="EnsemblFungi"/>
</dbReference>
<dbReference type="GO" id="GO:0042144">
    <property type="term" value="P:vacuole fusion, non-autophagic"/>
    <property type="evidence" value="ECO:0007669"/>
    <property type="project" value="EnsemblFungi"/>
</dbReference>
<dbReference type="GO" id="GO:0000011">
    <property type="term" value="P:vacuole inheritance"/>
    <property type="evidence" value="ECO:0007669"/>
    <property type="project" value="EnsemblFungi"/>
</dbReference>
<dbReference type="FunFam" id="1.25.10.10:FF:000470">
    <property type="entry name" value="Vacuolar protein 8"/>
    <property type="match status" value="1"/>
</dbReference>
<dbReference type="Gene3D" id="1.25.10.10">
    <property type="entry name" value="Leucine-rich Repeat Variant"/>
    <property type="match status" value="2"/>
</dbReference>
<dbReference type="InterPro" id="IPR011989">
    <property type="entry name" value="ARM-like"/>
</dbReference>
<dbReference type="InterPro" id="IPR016024">
    <property type="entry name" value="ARM-type_fold"/>
</dbReference>
<dbReference type="InterPro" id="IPR000225">
    <property type="entry name" value="Armadillo"/>
</dbReference>
<dbReference type="InterPro" id="IPR045156">
    <property type="entry name" value="Vac8"/>
</dbReference>
<dbReference type="PANTHER" id="PTHR47249">
    <property type="entry name" value="VACUOLAR PROTEIN 8"/>
    <property type="match status" value="1"/>
</dbReference>
<dbReference type="PANTHER" id="PTHR47249:SF1">
    <property type="entry name" value="VACUOLAR PROTEIN 8"/>
    <property type="match status" value="1"/>
</dbReference>
<dbReference type="Pfam" id="PF00514">
    <property type="entry name" value="Arm"/>
    <property type="match status" value="7"/>
</dbReference>
<dbReference type="SMART" id="SM00185">
    <property type="entry name" value="ARM"/>
    <property type="match status" value="9"/>
</dbReference>
<dbReference type="SUPFAM" id="SSF48371">
    <property type="entry name" value="ARM repeat"/>
    <property type="match status" value="2"/>
</dbReference>
<dbReference type="PROSITE" id="PS50176">
    <property type="entry name" value="ARM_REPEAT"/>
    <property type="match status" value="7"/>
</dbReference>
<evidence type="ECO:0000250" key="1"/>
<evidence type="ECO:0000255" key="2"/>
<evidence type="ECO:0000305" key="3"/>
<sequence length="568" mass="61973">MGGCCSCLKESQDDATVLPIAENEREAVTSLLGYLEDKDNYDFYSGGPLKALTTLVYSDNLNLQRSAALAFAEITEKYVRPVDREVLEPILILLQSHDPQIQIAACAALGNLAVNNENKILIVEMGGLEPLIEQMKSNNVEVQCNAVGCITNLATQDDNKAKIAHSGALVPLTKLAKSKNIRVQRNATGALLNMTHSGENRKELVDAGAVPVLVSLLSSSDADVQYYCTTALSNIAVDESNRRKLSQTEPRLVSKLVVLTDSPSARVKCQATLALRNLASDTGYQLEIVRAGGLSHLVKLIQCNSMPLVLASVACIRNISIHPLNEGLIVDAGFLKPLVKLLDYNDNEEIQCHAVSTLRNLAASSEKNRQEFFESGAVEKCKQLALVSPISVQSEISACFAILALADNSKLELLDANILEALIPMTFSTNQEVAGNAAAALANLCSRINNYEKIIESWTEPSKGVCGFLIRFLQSEYPTFEHIALWTILQLLESHNETMLGLIKSNKEIVKSIKRLSDINYENAQKASSLHSRLQQVNGGSVASGSEQYEHASLELYNITQQIMQFLN</sequence>
<gene>
    <name type="primary">VAC8</name>
    <name type="ordered locus">AEL048W</name>
</gene>
<proteinExistence type="inferred from homology"/>
<organism>
    <name type="scientific">Eremothecium gossypii (strain ATCC 10895 / CBS 109.51 / FGSC 9923 / NRRL Y-1056)</name>
    <name type="common">Yeast</name>
    <name type="synonym">Ashbya gossypii</name>
    <dbReference type="NCBI Taxonomy" id="284811"/>
    <lineage>
        <taxon>Eukaryota</taxon>
        <taxon>Fungi</taxon>
        <taxon>Dikarya</taxon>
        <taxon>Ascomycota</taxon>
        <taxon>Saccharomycotina</taxon>
        <taxon>Saccharomycetes</taxon>
        <taxon>Saccharomycetales</taxon>
        <taxon>Saccharomycetaceae</taxon>
        <taxon>Eremothecium</taxon>
    </lineage>
</organism>
<name>VAC8_EREGS</name>
<keyword id="KW-0449">Lipoprotein</keyword>
<keyword id="KW-0472">Membrane</keyword>
<keyword id="KW-0519">Myristate</keyword>
<keyword id="KW-0564">Palmitate</keyword>
<keyword id="KW-1185">Reference proteome</keyword>
<keyword id="KW-0677">Repeat</keyword>
<keyword id="KW-0926">Vacuole</keyword>
<feature type="initiator methionine" description="Removed" evidence="1">
    <location>
        <position position="1"/>
    </location>
</feature>
<feature type="chain" id="PRO_0000256205" description="Vacuolar protein 8">
    <location>
        <begin position="2"/>
        <end position="568"/>
    </location>
</feature>
<feature type="repeat" description="ARM 1">
    <location>
        <begin position="37"/>
        <end position="74"/>
    </location>
</feature>
<feature type="repeat" description="ARM 2">
    <location>
        <begin position="75"/>
        <end position="114"/>
    </location>
</feature>
<feature type="repeat" description="ARM 3">
    <location>
        <begin position="116"/>
        <end position="155"/>
    </location>
</feature>
<feature type="repeat" description="ARM 4">
    <location>
        <begin position="157"/>
        <end position="196"/>
    </location>
</feature>
<feature type="repeat" description="ARM 5">
    <location>
        <begin position="198"/>
        <end position="237"/>
    </location>
</feature>
<feature type="repeat" description="ARM 6">
    <location>
        <begin position="241"/>
        <end position="280"/>
    </location>
</feature>
<feature type="repeat" description="ARM 7">
    <location>
        <begin position="282"/>
        <end position="321"/>
    </location>
</feature>
<feature type="repeat" description="ARM 8">
    <location>
        <begin position="323"/>
        <end position="363"/>
    </location>
</feature>
<feature type="repeat" description="ARM 9">
    <location>
        <begin position="407"/>
        <end position="446"/>
    </location>
</feature>
<feature type="lipid moiety-binding region" description="N-myristoyl glycine" evidence="1">
    <location>
        <position position="2"/>
    </location>
</feature>
<feature type="lipid moiety-binding region" description="S-palmitoyl cysteine" evidence="2">
    <location>
        <position position="4"/>
    </location>
</feature>
<feature type="lipid moiety-binding region" description="S-palmitoyl cysteine" evidence="2">
    <location>
        <position position="5"/>
    </location>
</feature>
<feature type="lipid moiety-binding region" description="S-palmitoyl cysteine" evidence="2">
    <location>
        <position position="7"/>
    </location>
</feature>
<reference key="1">
    <citation type="journal article" date="2004" name="Science">
        <title>The Ashbya gossypii genome as a tool for mapping the ancient Saccharomyces cerevisiae genome.</title>
        <authorList>
            <person name="Dietrich F.S."/>
            <person name="Voegeli S."/>
            <person name="Brachat S."/>
            <person name="Lerch A."/>
            <person name="Gates K."/>
            <person name="Steiner S."/>
            <person name="Mohr C."/>
            <person name="Poehlmann R."/>
            <person name="Luedi P."/>
            <person name="Choi S."/>
            <person name="Wing R.A."/>
            <person name="Flavier A."/>
            <person name="Gaffney T.D."/>
            <person name="Philippsen P."/>
        </authorList>
    </citation>
    <scope>NUCLEOTIDE SEQUENCE [LARGE SCALE GENOMIC DNA]</scope>
    <source>
        <strain>ATCC 10895 / CBS 109.51 / FGSC 9923 / NRRL Y-1056</strain>
    </source>
</reference>
<reference key="2">
    <citation type="journal article" date="2013" name="G3 (Bethesda)">
        <title>Genomes of Ashbya fungi isolated from insects reveal four mating-type loci, numerous translocations, lack of transposons, and distinct gene duplications.</title>
        <authorList>
            <person name="Dietrich F.S."/>
            <person name="Voegeli S."/>
            <person name="Kuo S."/>
            <person name="Philippsen P."/>
        </authorList>
    </citation>
    <scope>GENOME REANNOTATION</scope>
    <source>
        <strain>ATCC 10895 / CBS 109.51 / FGSC 9923 / NRRL Y-1056</strain>
    </source>
</reference>
<protein>
    <recommendedName>
        <fullName>Vacuolar protein 8</fullName>
    </recommendedName>
</protein>
<accession>Q757R0</accession>